<organism>
    <name type="scientific">Oryza sativa subsp. japonica</name>
    <name type="common">Rice</name>
    <dbReference type="NCBI Taxonomy" id="39947"/>
    <lineage>
        <taxon>Eukaryota</taxon>
        <taxon>Viridiplantae</taxon>
        <taxon>Streptophyta</taxon>
        <taxon>Embryophyta</taxon>
        <taxon>Tracheophyta</taxon>
        <taxon>Spermatophyta</taxon>
        <taxon>Magnoliopsida</taxon>
        <taxon>Liliopsida</taxon>
        <taxon>Poales</taxon>
        <taxon>Poaceae</taxon>
        <taxon>BOP clade</taxon>
        <taxon>Oryzoideae</taxon>
        <taxon>Oryzeae</taxon>
        <taxon>Oryzinae</taxon>
        <taxon>Oryza</taxon>
        <taxon>Oryza sativa</taxon>
    </lineage>
</organism>
<reference key="1">
    <citation type="journal article" date="2005" name="BMC Biol.">
        <title>The sequence of rice chromosomes 11 and 12, rich in disease resistance genes and recent gene duplications.</title>
        <authorList>
            <consortium name="The rice chromosomes 11 and 12 sequencing consortia"/>
        </authorList>
    </citation>
    <scope>NUCLEOTIDE SEQUENCE [LARGE SCALE GENOMIC DNA]</scope>
    <source>
        <strain>cv. Nipponbare</strain>
    </source>
</reference>
<reference key="2">
    <citation type="journal article" date="2005" name="Nature">
        <title>The map-based sequence of the rice genome.</title>
        <authorList>
            <consortium name="International rice genome sequencing project (IRGSP)"/>
        </authorList>
    </citation>
    <scope>NUCLEOTIDE SEQUENCE [LARGE SCALE GENOMIC DNA]</scope>
    <source>
        <strain>cv. Nipponbare</strain>
    </source>
</reference>
<reference key="3">
    <citation type="journal article" date="2008" name="Nucleic Acids Res.">
        <title>The rice annotation project database (RAP-DB): 2008 update.</title>
        <authorList>
            <consortium name="The rice annotation project (RAP)"/>
        </authorList>
    </citation>
    <scope>GENOME REANNOTATION</scope>
    <source>
        <strain>cv. Nipponbare</strain>
    </source>
</reference>
<reference key="4">
    <citation type="journal article" date="2013" name="Rice">
        <title>Improvement of the Oryza sativa Nipponbare reference genome using next generation sequence and optical map data.</title>
        <authorList>
            <person name="Kawahara Y."/>
            <person name="de la Bastide M."/>
            <person name="Hamilton J.P."/>
            <person name="Kanamori H."/>
            <person name="McCombie W.R."/>
            <person name="Ouyang S."/>
            <person name="Schwartz D.C."/>
            <person name="Tanaka T."/>
            <person name="Wu J."/>
            <person name="Zhou S."/>
            <person name="Childs K.L."/>
            <person name="Davidson R.M."/>
            <person name="Lin H."/>
            <person name="Quesada-Ocampo L."/>
            <person name="Vaillancourt B."/>
            <person name="Sakai H."/>
            <person name="Lee S.S."/>
            <person name="Kim J."/>
            <person name="Numa H."/>
            <person name="Itoh T."/>
            <person name="Buell C.R."/>
            <person name="Matsumoto T."/>
        </authorList>
    </citation>
    <scope>GENOME REANNOTATION</scope>
    <source>
        <strain>cv. Nipponbare</strain>
    </source>
</reference>
<reference key="5">
    <citation type="journal article" date="2005" name="PLoS Biol.">
        <title>The genomes of Oryza sativa: a history of duplications.</title>
        <authorList>
            <person name="Yu J."/>
            <person name="Wang J."/>
            <person name="Lin W."/>
            <person name="Li S."/>
            <person name="Li H."/>
            <person name="Zhou J."/>
            <person name="Ni P."/>
            <person name="Dong W."/>
            <person name="Hu S."/>
            <person name="Zeng C."/>
            <person name="Zhang J."/>
            <person name="Zhang Y."/>
            <person name="Li R."/>
            <person name="Xu Z."/>
            <person name="Li S."/>
            <person name="Li X."/>
            <person name="Zheng H."/>
            <person name="Cong L."/>
            <person name="Lin L."/>
            <person name="Yin J."/>
            <person name="Geng J."/>
            <person name="Li G."/>
            <person name="Shi J."/>
            <person name="Liu J."/>
            <person name="Lv H."/>
            <person name="Li J."/>
            <person name="Wang J."/>
            <person name="Deng Y."/>
            <person name="Ran L."/>
            <person name="Shi X."/>
            <person name="Wang X."/>
            <person name="Wu Q."/>
            <person name="Li C."/>
            <person name="Ren X."/>
            <person name="Wang J."/>
            <person name="Wang X."/>
            <person name="Li D."/>
            <person name="Liu D."/>
            <person name="Zhang X."/>
            <person name="Ji Z."/>
            <person name="Zhao W."/>
            <person name="Sun Y."/>
            <person name="Zhang Z."/>
            <person name="Bao J."/>
            <person name="Han Y."/>
            <person name="Dong L."/>
            <person name="Ji J."/>
            <person name="Chen P."/>
            <person name="Wu S."/>
            <person name="Liu J."/>
            <person name="Xiao Y."/>
            <person name="Bu D."/>
            <person name="Tan J."/>
            <person name="Yang L."/>
            <person name="Ye C."/>
            <person name="Zhang J."/>
            <person name="Xu J."/>
            <person name="Zhou Y."/>
            <person name="Yu Y."/>
            <person name="Zhang B."/>
            <person name="Zhuang S."/>
            <person name="Wei H."/>
            <person name="Liu B."/>
            <person name="Lei M."/>
            <person name="Yu H."/>
            <person name="Li Y."/>
            <person name="Xu H."/>
            <person name="Wei S."/>
            <person name="He X."/>
            <person name="Fang L."/>
            <person name="Zhang Z."/>
            <person name="Zhang Y."/>
            <person name="Huang X."/>
            <person name="Su Z."/>
            <person name="Tong W."/>
            <person name="Li J."/>
            <person name="Tong Z."/>
            <person name="Li S."/>
            <person name="Ye J."/>
            <person name="Wang L."/>
            <person name="Fang L."/>
            <person name="Lei T."/>
            <person name="Chen C.-S."/>
            <person name="Chen H.-C."/>
            <person name="Xu Z."/>
            <person name="Li H."/>
            <person name="Huang H."/>
            <person name="Zhang F."/>
            <person name="Xu H."/>
            <person name="Li N."/>
            <person name="Zhao C."/>
            <person name="Li S."/>
            <person name="Dong L."/>
            <person name="Huang Y."/>
            <person name="Li L."/>
            <person name="Xi Y."/>
            <person name="Qi Q."/>
            <person name="Li W."/>
            <person name="Zhang B."/>
            <person name="Hu W."/>
            <person name="Zhang Y."/>
            <person name="Tian X."/>
            <person name="Jiao Y."/>
            <person name="Liang X."/>
            <person name="Jin J."/>
            <person name="Gao L."/>
            <person name="Zheng W."/>
            <person name="Hao B."/>
            <person name="Liu S.-M."/>
            <person name="Wang W."/>
            <person name="Yuan L."/>
            <person name="Cao M."/>
            <person name="McDermott J."/>
            <person name="Samudrala R."/>
            <person name="Wang J."/>
            <person name="Wong G.K.-S."/>
            <person name="Yang H."/>
        </authorList>
    </citation>
    <scope>NUCLEOTIDE SEQUENCE [LARGE SCALE GENOMIC DNA]</scope>
    <source>
        <strain>cv. Nipponbare</strain>
    </source>
</reference>
<reference key="6">
    <citation type="journal article" date="2003" name="Science">
        <title>Collection, mapping, and annotation of over 28,000 cDNA clones from japonica rice.</title>
        <authorList>
            <consortium name="The rice full-length cDNA consortium"/>
        </authorList>
    </citation>
    <scope>NUCLEOTIDE SEQUENCE [LARGE SCALE MRNA]</scope>
    <source>
        <strain>cv. Nipponbare</strain>
    </source>
</reference>
<reference key="7">
    <citation type="journal article" date="2010" name="Plant Sci.">
        <title>Identification and expression analysis of PIN genes in rice.</title>
        <authorList>
            <person name="Miyashita Y."/>
            <person name="Takasugi T."/>
            <person name="Ito Y."/>
        </authorList>
    </citation>
    <scope>IDENTIFICATION</scope>
    <scope>TISSUE SPECIFICITY</scope>
</reference>
<reference key="8">
    <citation type="journal article" date="2005" name="Plant Cell Physiol.">
        <title>A PIN1 family gene, OsPIN1, involved in auxin-dependent adventitious root emergence and tillering in rice.</title>
        <authorList>
            <person name="Xu M."/>
            <person name="Zhu L."/>
            <person name="Shou H."/>
            <person name="Wu P."/>
        </authorList>
    </citation>
    <scope>NOMENCLATURE</scope>
</reference>
<reference key="9">
    <citation type="journal article" date="2009" name="Mol. Plant">
        <title>Expression of PIN genes in rice (Oryza sativa L.): tissue specificity and regulation by hormones.</title>
        <authorList>
            <person name="Wang J.R."/>
            <person name="Hu H."/>
            <person name="Wang G.H."/>
            <person name="Li J."/>
            <person name="Chen J.Y."/>
            <person name="Wu P."/>
        </authorList>
    </citation>
    <scope>TISSUE SPECIFICITY</scope>
</reference>
<dbReference type="EMBL" id="DP000010">
    <property type="protein sequence ID" value="ABA91350.1"/>
    <property type="molecule type" value="Genomic_DNA"/>
</dbReference>
<dbReference type="EMBL" id="AP008217">
    <property type="protein sequence ID" value="BAF27538.1"/>
    <property type="molecule type" value="Genomic_DNA"/>
</dbReference>
<dbReference type="EMBL" id="AP014967">
    <property type="protein sequence ID" value="BAT12573.1"/>
    <property type="molecule type" value="Genomic_DNA"/>
</dbReference>
<dbReference type="EMBL" id="CM000148">
    <property type="protein sequence ID" value="EEE51610.1"/>
    <property type="molecule type" value="Genomic_DNA"/>
</dbReference>
<dbReference type="EMBL" id="AK103181">
    <property type="status" value="NOT_ANNOTATED_CDS"/>
    <property type="molecule type" value="mRNA"/>
</dbReference>
<dbReference type="EMBL" id="BR000828">
    <property type="protein sequence ID" value="FAA00677.1"/>
    <property type="molecule type" value="Genomic_DNA"/>
</dbReference>
<dbReference type="RefSeq" id="XP_015616014.1">
    <property type="nucleotide sequence ID" value="XM_015760528.1"/>
</dbReference>
<dbReference type="SMR" id="P0C0X5"/>
<dbReference type="FunCoup" id="P0C0X5">
    <property type="interactions" value="12"/>
</dbReference>
<dbReference type="STRING" id="39947.P0C0X5"/>
<dbReference type="TCDB" id="2.A.69.1.9">
    <property type="family name" value="the auxin efflux carrier (aec) family"/>
</dbReference>
<dbReference type="GlyCosmos" id="P0C0X5">
    <property type="glycosylation" value="2 sites, No reported glycans"/>
</dbReference>
<dbReference type="PaxDb" id="39947-P0C0X5"/>
<dbReference type="EnsemblPlants" id="Os11t0137000-01">
    <property type="protein sequence ID" value="Os11t0137000-01"/>
    <property type="gene ID" value="Os11g0137000"/>
</dbReference>
<dbReference type="Gramene" id="Os11t0137000-01">
    <property type="protein sequence ID" value="Os11t0137000-01"/>
    <property type="gene ID" value="Os11g0137000"/>
</dbReference>
<dbReference type="KEGG" id="dosa:Os11g0137000"/>
<dbReference type="eggNOG" id="ENOG502QS61">
    <property type="taxonomic scope" value="Eukaryota"/>
</dbReference>
<dbReference type="HOGENOM" id="CLU_019285_1_1_1"/>
<dbReference type="InParanoid" id="P0C0X5"/>
<dbReference type="OMA" id="YSMVNNG"/>
<dbReference type="OrthoDB" id="1868374at2759"/>
<dbReference type="PlantReactome" id="R-OSA-5608118">
    <property type="pathway name" value="Auxin signalling"/>
</dbReference>
<dbReference type="PlantReactome" id="R-OSA-8858053">
    <property type="pathway name" value="Polar auxin transport"/>
</dbReference>
<dbReference type="PlantReactome" id="R-OSA-9639861">
    <property type="pathway name" value="Development of root hair"/>
</dbReference>
<dbReference type="Proteomes" id="UP000000763">
    <property type="component" value="Chromosome 11"/>
</dbReference>
<dbReference type="Proteomes" id="UP000007752">
    <property type="component" value="Chromosome 11"/>
</dbReference>
<dbReference type="Proteomes" id="UP000059680">
    <property type="component" value="Chromosome 11"/>
</dbReference>
<dbReference type="GO" id="GO:0071944">
    <property type="term" value="C:cell periphery"/>
    <property type="evidence" value="ECO:0000250"/>
    <property type="project" value="UniProtKB"/>
</dbReference>
<dbReference type="GO" id="GO:0005783">
    <property type="term" value="C:endoplasmic reticulum"/>
    <property type="evidence" value="ECO:0000318"/>
    <property type="project" value="GO_Central"/>
</dbReference>
<dbReference type="GO" id="GO:0005886">
    <property type="term" value="C:plasma membrane"/>
    <property type="evidence" value="ECO:0000250"/>
    <property type="project" value="UniProtKB"/>
</dbReference>
<dbReference type="GO" id="GO:0010329">
    <property type="term" value="F:auxin efflux transmembrane transporter activity"/>
    <property type="evidence" value="ECO:0000250"/>
    <property type="project" value="UniProtKB"/>
</dbReference>
<dbReference type="GO" id="GO:0042802">
    <property type="term" value="F:identical protein binding"/>
    <property type="evidence" value="ECO:0000250"/>
    <property type="project" value="UniProtKB"/>
</dbReference>
<dbReference type="GO" id="GO:0042803">
    <property type="term" value="F:protein homodimerization activity"/>
    <property type="evidence" value="ECO:0000250"/>
    <property type="project" value="UniProtKB"/>
</dbReference>
<dbReference type="GO" id="GO:0010315">
    <property type="term" value="P:auxin export across the plasma membrane"/>
    <property type="evidence" value="ECO:0000250"/>
    <property type="project" value="UniProtKB"/>
</dbReference>
<dbReference type="GO" id="GO:0009926">
    <property type="term" value="P:auxin polar transport"/>
    <property type="evidence" value="ECO:0000318"/>
    <property type="project" value="GO_Central"/>
</dbReference>
<dbReference type="GO" id="GO:0009734">
    <property type="term" value="P:auxin-activated signaling pathway"/>
    <property type="evidence" value="ECO:0007669"/>
    <property type="project" value="UniProtKB-KW"/>
</dbReference>
<dbReference type="InterPro" id="IPR014024">
    <property type="entry name" value="Auxin_eff_plant"/>
</dbReference>
<dbReference type="InterPro" id="IPR051107">
    <property type="entry name" value="Auxin_Efflux_Carrier"/>
</dbReference>
<dbReference type="InterPro" id="IPR004776">
    <property type="entry name" value="Mem_transp_PIN-like"/>
</dbReference>
<dbReference type="NCBIfam" id="TIGR00946">
    <property type="entry name" value="2a69"/>
    <property type="match status" value="1"/>
</dbReference>
<dbReference type="PANTHER" id="PTHR31752">
    <property type="entry name" value="AUXIN EFFLUX CARRIER COMPONENT 1B-RELATED"/>
    <property type="match status" value="1"/>
</dbReference>
<dbReference type="PANTHER" id="PTHR31752:SF66">
    <property type="entry name" value="AUXIN EFFLUX CARRIER COMPONENT 1B-RELATED"/>
    <property type="match status" value="1"/>
</dbReference>
<dbReference type="Pfam" id="PF03547">
    <property type="entry name" value="Mem_trans"/>
    <property type="match status" value="1"/>
</dbReference>
<comment type="function">
    <text evidence="9">May act as a component of the auxin efflux carrier.</text>
</comment>
<comment type="subunit">
    <text evidence="1">Homodimer.</text>
</comment>
<comment type="subcellular location">
    <subcellularLocation>
        <location evidence="3">Membrane</location>
        <topology evidence="3">Multi-pass membrane protein</topology>
    </subcellularLocation>
</comment>
<comment type="tissue specificity">
    <text evidence="5 6">Expressed in roots and shoot apex (Ref.7). Expressed in roots, stem bases, stems, leaves and young panicles (PubMed:19825657).</text>
</comment>
<comment type="similarity">
    <text evidence="9">Belongs to the auxin efflux carrier (TC 2.A.69.1) family.</text>
</comment>
<sequence length="554" mass="59270">MITVVDLYHVLTAVVPLYVAMTLAYASVRWWRIFSPDQCSGINRFVALFAVPLLSFHFISTNNPFAMNLRFLAADTLQKLIVLALLALWCRLSARGSLDWLITLFSLSTLPNTLVMGIPLLKGMYAAAADVDSGSLMVQIVVLQCIIWYTLMLFLFEYRGARLLVMEQFPDTAASIVSFRVDSDVVSLAGGGGGAAELQAEAEVGDDGRMRVTVRKSTSSRSEAACSHGTQSHSQSMQPRVSNLSGVEIYSLQSSRNPTPRGSSFNHAEFFNIVGNGKQGDEEKGAAGGGGHSPQPVVGKRKDLHMFVWSSSASPVSERAAAAAAGAVHVFGGGGADHGDAKGAQAYDEYSFGNKNEKDGPTLSKLGSNSTAQLRPKDDGEGMAAAMPPASVMTRLILIMVWRKLIRNPNTYSSLLGVIWSLVSYRWGIEMPAIIARSISILSDAGLGMAMFSLGLFMALQPRIIACGNSLASYAMAVRFLVGPAVMAAASIAVGLRGVLLHIAIVQAALPQGIVPFVFAKEYNVHPNILSTAVIFGMLIALPITLVYYILLGL</sequence>
<evidence type="ECO:0000250" key="1">
    <source>
        <dbReference type="UniProtKB" id="Q9C6B8"/>
    </source>
</evidence>
<evidence type="ECO:0000250" key="2">
    <source>
        <dbReference type="UniProtKB" id="Q9LFP6"/>
    </source>
</evidence>
<evidence type="ECO:0000255" key="3"/>
<evidence type="ECO:0000256" key="4">
    <source>
        <dbReference type="SAM" id="MobiDB-lite"/>
    </source>
</evidence>
<evidence type="ECO:0000269" key="5">
    <source>
    </source>
</evidence>
<evidence type="ECO:0000269" key="6">
    <source ref="7"/>
</evidence>
<evidence type="ECO:0000303" key="7">
    <source>
    </source>
</evidence>
<evidence type="ECO:0000303" key="8">
    <source>
    </source>
</evidence>
<evidence type="ECO:0000305" key="9"/>
<evidence type="ECO:0000312" key="10">
    <source>
        <dbReference type="EMBL" id="BAT12573.1"/>
    </source>
</evidence>
<evidence type="ECO:0000312" key="11">
    <source>
        <dbReference type="EMBL" id="EEE51610.1"/>
    </source>
</evidence>
<gene>
    <name evidence="7" type="primary">PIN1B</name>
    <name evidence="10" type="ordered locus">Os11g0137000</name>
    <name evidence="9" type="ordered locus">LOC_Os11g04190</name>
    <name evidence="11" type="ORF">OsJ_32878</name>
</gene>
<feature type="chain" id="PRO_0000123789" description="Probable auxin efflux carrier component 1b">
    <location>
        <begin position="1"/>
        <end position="554"/>
    </location>
</feature>
<feature type="topological domain" description="Extracellular" evidence="9">
    <location>
        <begin position="1"/>
        <end position="6"/>
    </location>
</feature>
<feature type="transmembrane region" description="Helical; Name=1" evidence="3">
    <location>
        <begin position="7"/>
        <end position="27"/>
    </location>
</feature>
<feature type="topological domain" description="Cytoplasmic" evidence="9">
    <location>
        <begin position="28"/>
        <end position="38"/>
    </location>
</feature>
<feature type="transmembrane region" description="Helical; Name=2" evidence="3">
    <location>
        <begin position="39"/>
        <end position="59"/>
    </location>
</feature>
<feature type="topological domain" description="Extracellular" evidence="9">
    <location>
        <begin position="60"/>
        <end position="68"/>
    </location>
</feature>
<feature type="transmembrane region" description="Helical; Name=3" evidence="3">
    <location>
        <begin position="69"/>
        <end position="89"/>
    </location>
</feature>
<feature type="topological domain" description="Cytoplasmic" evidence="9">
    <location>
        <begin position="90"/>
        <end position="100"/>
    </location>
</feature>
<feature type="transmembrane region" description="Helical; Name=4" evidence="3">
    <location>
        <begin position="101"/>
        <end position="121"/>
    </location>
</feature>
<feature type="topological domain" description="Extracellular" evidence="9">
    <location>
        <begin position="122"/>
        <end position="135"/>
    </location>
</feature>
<feature type="transmembrane region" description="Helical; Name=5" evidence="3">
    <location>
        <begin position="136"/>
        <end position="156"/>
    </location>
</feature>
<feature type="topological domain" description="Cytoplasmic" evidence="9">
    <location>
        <begin position="157"/>
        <end position="414"/>
    </location>
</feature>
<feature type="transmembrane region" description="Helical; Name=6" evidence="3">
    <location>
        <begin position="415"/>
        <end position="435"/>
    </location>
</feature>
<feature type="topological domain" description="Extracellular" evidence="9">
    <location>
        <begin position="436"/>
        <end position="438"/>
    </location>
</feature>
<feature type="transmembrane region" description="Helical; Name=7" evidence="3">
    <location>
        <begin position="439"/>
        <end position="459"/>
    </location>
</feature>
<feature type="topological domain" description="Cytoplasmic" evidence="9">
    <location>
        <begin position="460"/>
        <end position="475"/>
    </location>
</feature>
<feature type="transmembrane region" description="Helical; Name=8" evidence="3">
    <location>
        <begin position="476"/>
        <end position="496"/>
    </location>
</feature>
<feature type="topological domain" description="Extracellular" evidence="9">
    <location>
        <begin position="497"/>
        <end position="498"/>
    </location>
</feature>
<feature type="transmembrane region" description="Helical; Name=9" evidence="3">
    <location>
        <begin position="499"/>
        <end position="519"/>
    </location>
</feature>
<feature type="topological domain" description="Cytoplasmic" evidence="9">
    <location>
        <begin position="520"/>
        <end position="533"/>
    </location>
</feature>
<feature type="transmembrane region" description="Helical; Name=10" evidence="3">
    <location>
        <begin position="534"/>
        <end position="554"/>
    </location>
</feature>
<feature type="region of interest" description="Disordered" evidence="4">
    <location>
        <begin position="214"/>
        <end position="240"/>
    </location>
</feature>
<feature type="region of interest" description="Disordered" evidence="4">
    <location>
        <begin position="275"/>
        <end position="298"/>
    </location>
</feature>
<feature type="region of interest" description="Disordered" evidence="4">
    <location>
        <begin position="352"/>
        <end position="385"/>
    </location>
</feature>
<feature type="compositionally biased region" description="Polar residues" evidence="4">
    <location>
        <begin position="228"/>
        <end position="240"/>
    </location>
</feature>
<feature type="binding site" evidence="2">
    <location>
        <position position="51"/>
    </location>
    <ligand>
        <name>(indol-3-yl)acetate</name>
        <dbReference type="ChEBI" id="CHEBI:30854"/>
    </ligand>
</feature>
<feature type="binding site" evidence="2">
    <location>
        <position position="112"/>
    </location>
    <ligand>
        <name>(indol-3-yl)acetate</name>
        <dbReference type="ChEBI" id="CHEBI:30854"/>
    </ligand>
</feature>
<feature type="binding site" evidence="2">
    <location>
        <position position="114"/>
    </location>
    <ligand>
        <name>(indol-3-yl)acetate</name>
        <dbReference type="ChEBI" id="CHEBI:30854"/>
    </ligand>
</feature>
<feature type="binding site" evidence="2">
    <location>
        <position position="149"/>
    </location>
    <ligand>
        <name>(indol-3-yl)acetate</name>
        <dbReference type="ChEBI" id="CHEBI:30854"/>
    </ligand>
</feature>
<feature type="binding site" evidence="2">
    <location>
        <position position="514"/>
    </location>
    <ligand>
        <name>(indol-3-yl)acetate</name>
        <dbReference type="ChEBI" id="CHEBI:30854"/>
    </ligand>
</feature>
<feature type="binding site" evidence="2">
    <location>
        <position position="515"/>
    </location>
    <ligand>
        <name>(indol-3-yl)acetate</name>
        <dbReference type="ChEBI" id="CHEBI:30854"/>
    </ligand>
</feature>
<feature type="sequence conflict" description="In Ref. 6; AK103181." evidence="9" ref="6">
    <original>R</original>
    <variation>G</variation>
    <location>
        <position position="479"/>
    </location>
</feature>
<protein>
    <recommendedName>
        <fullName evidence="9">Probable auxin efflux carrier component 1b</fullName>
        <shortName evidence="7">OsPIN1b</shortName>
    </recommendedName>
    <alternativeName>
        <fullName evidence="8">OsPIN1c</fullName>
    </alternativeName>
</protein>
<keyword id="KW-0927">Auxin signaling pathway</keyword>
<keyword id="KW-0472">Membrane</keyword>
<keyword id="KW-1185">Reference proteome</keyword>
<keyword id="KW-0812">Transmembrane</keyword>
<keyword id="KW-1133">Transmembrane helix</keyword>
<keyword id="KW-0813">Transport</keyword>
<proteinExistence type="evidence at transcript level"/>
<name>PIN1B_ORYSJ</name>
<accession>P0C0X5</accession>
<accession>D5A7I6</accession>
<accession>Q2RAU7</accession>